<evidence type="ECO:0000255" key="1">
    <source>
        <dbReference type="HAMAP-Rule" id="MF_00154"/>
    </source>
</evidence>
<dbReference type="EC" id="2.5.1.141" evidence="1"/>
<dbReference type="EMBL" id="CP000001">
    <property type="protein sequence ID" value="AAU16561.1"/>
    <property type="molecule type" value="Genomic_DNA"/>
</dbReference>
<dbReference type="RefSeq" id="WP_001015052.1">
    <property type="nucleotide sequence ID" value="NZ_CP009968.1"/>
</dbReference>
<dbReference type="SMR" id="Q635Y1"/>
<dbReference type="GeneID" id="45023832"/>
<dbReference type="KEGG" id="bcz:BCE33L3705"/>
<dbReference type="PATRIC" id="fig|288681.22.peg.1707"/>
<dbReference type="UniPathway" id="UPA00834">
    <property type="reaction ID" value="UER00712"/>
</dbReference>
<dbReference type="Proteomes" id="UP000002612">
    <property type="component" value="Chromosome"/>
</dbReference>
<dbReference type="GO" id="GO:0005886">
    <property type="term" value="C:plasma membrane"/>
    <property type="evidence" value="ECO:0007669"/>
    <property type="project" value="UniProtKB-SubCell"/>
</dbReference>
<dbReference type="GO" id="GO:0008495">
    <property type="term" value="F:protoheme IX farnesyltransferase activity"/>
    <property type="evidence" value="ECO:0007669"/>
    <property type="project" value="UniProtKB-UniRule"/>
</dbReference>
<dbReference type="GO" id="GO:0048034">
    <property type="term" value="P:heme O biosynthetic process"/>
    <property type="evidence" value="ECO:0007669"/>
    <property type="project" value="UniProtKB-UniRule"/>
</dbReference>
<dbReference type="CDD" id="cd13957">
    <property type="entry name" value="PT_UbiA_Cox10"/>
    <property type="match status" value="1"/>
</dbReference>
<dbReference type="FunFam" id="1.10.357.140:FF:000001">
    <property type="entry name" value="Protoheme IX farnesyltransferase"/>
    <property type="match status" value="1"/>
</dbReference>
<dbReference type="Gene3D" id="1.10.357.140">
    <property type="entry name" value="UbiA prenyltransferase"/>
    <property type="match status" value="1"/>
</dbReference>
<dbReference type="HAMAP" id="MF_00154">
    <property type="entry name" value="CyoE_CtaB"/>
    <property type="match status" value="1"/>
</dbReference>
<dbReference type="InterPro" id="IPR006369">
    <property type="entry name" value="Protohaem_IX_farnesylTrfase"/>
</dbReference>
<dbReference type="InterPro" id="IPR000537">
    <property type="entry name" value="UbiA_prenyltransferase"/>
</dbReference>
<dbReference type="InterPro" id="IPR030470">
    <property type="entry name" value="UbiA_prenylTrfase_CS"/>
</dbReference>
<dbReference type="InterPro" id="IPR044878">
    <property type="entry name" value="UbiA_sf"/>
</dbReference>
<dbReference type="NCBIfam" id="TIGR01473">
    <property type="entry name" value="cyoE_ctaB"/>
    <property type="match status" value="1"/>
</dbReference>
<dbReference type="PANTHER" id="PTHR43448">
    <property type="entry name" value="PROTOHEME IX FARNESYLTRANSFERASE, MITOCHONDRIAL"/>
    <property type="match status" value="1"/>
</dbReference>
<dbReference type="PANTHER" id="PTHR43448:SF2">
    <property type="entry name" value="PROTOHEME IX FARNESYLTRANSFERASE, MITOCHONDRIAL"/>
    <property type="match status" value="1"/>
</dbReference>
<dbReference type="Pfam" id="PF01040">
    <property type="entry name" value="UbiA"/>
    <property type="match status" value="1"/>
</dbReference>
<dbReference type="PROSITE" id="PS00943">
    <property type="entry name" value="UBIA"/>
    <property type="match status" value="1"/>
</dbReference>
<accession>Q635Y1</accession>
<proteinExistence type="inferred from homology"/>
<comment type="function">
    <text evidence="1">Converts heme B (protoheme IX) to heme O by substitution of the vinyl group on carbon 2 of heme B porphyrin ring with a hydroxyethyl farnesyl side group.</text>
</comment>
<comment type="catalytic activity">
    <reaction evidence="1">
        <text>heme b + (2E,6E)-farnesyl diphosphate + H2O = Fe(II)-heme o + diphosphate</text>
        <dbReference type="Rhea" id="RHEA:28070"/>
        <dbReference type="ChEBI" id="CHEBI:15377"/>
        <dbReference type="ChEBI" id="CHEBI:33019"/>
        <dbReference type="ChEBI" id="CHEBI:60344"/>
        <dbReference type="ChEBI" id="CHEBI:60530"/>
        <dbReference type="ChEBI" id="CHEBI:175763"/>
        <dbReference type="EC" id="2.5.1.141"/>
    </reaction>
</comment>
<comment type="pathway">
    <text evidence="1">Porphyrin-containing compound metabolism; heme O biosynthesis; heme O from protoheme: step 1/1.</text>
</comment>
<comment type="subunit">
    <text evidence="1">Interacts with CtaA.</text>
</comment>
<comment type="subcellular location">
    <subcellularLocation>
        <location evidence="1">Cell membrane</location>
        <topology evidence="1">Multi-pass membrane protein</topology>
    </subcellularLocation>
</comment>
<comment type="miscellaneous">
    <text evidence="1">Carbon 2 of the heme B porphyrin ring is defined according to the Fischer nomenclature.</text>
</comment>
<comment type="similarity">
    <text evidence="1">Belongs to the UbiA prenyltransferase family. Protoheme IX farnesyltransferase subfamily.</text>
</comment>
<feature type="chain" id="PRO_0000327004" description="Protoheme IX farnesyltransferase">
    <location>
        <begin position="1"/>
        <end position="307"/>
    </location>
</feature>
<feature type="transmembrane region" description="Helical" evidence="1">
    <location>
        <begin position="32"/>
        <end position="52"/>
    </location>
</feature>
<feature type="transmembrane region" description="Helical" evidence="1">
    <location>
        <begin position="65"/>
        <end position="85"/>
    </location>
</feature>
<feature type="transmembrane region" description="Helical" evidence="1">
    <location>
        <begin position="108"/>
        <end position="128"/>
    </location>
</feature>
<feature type="transmembrane region" description="Helical" evidence="1">
    <location>
        <begin position="131"/>
        <end position="151"/>
    </location>
</feature>
<feature type="transmembrane region" description="Helical" evidence="1">
    <location>
        <begin position="158"/>
        <end position="178"/>
    </location>
</feature>
<feature type="transmembrane region" description="Helical" evidence="1">
    <location>
        <begin position="186"/>
        <end position="206"/>
    </location>
</feature>
<feature type="transmembrane region" description="Helical" evidence="1">
    <location>
        <begin position="251"/>
        <end position="271"/>
    </location>
</feature>
<feature type="transmembrane region" description="Helical" evidence="1">
    <location>
        <begin position="287"/>
        <end position="307"/>
    </location>
</feature>
<protein>
    <recommendedName>
        <fullName evidence="1">Protoheme IX farnesyltransferase</fullName>
        <ecNumber evidence="1">2.5.1.141</ecNumber>
    </recommendedName>
    <alternativeName>
        <fullName evidence="1">Heme B farnesyltransferase</fullName>
    </alternativeName>
    <alternativeName>
        <fullName evidence="1">Heme O synthase</fullName>
    </alternativeName>
</protein>
<name>COXX_BACCZ</name>
<sequence>MNHATSELHDESAVTSIPETTRLQDLKALVKMGIVNSNTLTVFTGFWLALHFNGLSVMDNLDKLFFTIVGSGLVMAGVCCLNNYIDRDIDPLMERTKTRPTVTGKYKPGFALTFGLVILLLGFVFLLLTTPMAVLMGFIGAFTYVVLYSLWTKRKYTLNTVVGSISGAVPPLIGWAAIDPSLGHPIAWMLFLIMFIWQIPHFLALAMKRVDEYRNAGIPMLPVVHGFEITKRQIMIWTVCLLPLPFYMSGLGITFMVIATLLNIGWIVLGFYGFRKKDDIKWSVQMFVYSLNYLTILFVSMIVVTFF</sequence>
<reference key="1">
    <citation type="journal article" date="2006" name="J. Bacteriol.">
        <title>Pathogenomic sequence analysis of Bacillus cereus and Bacillus thuringiensis isolates closely related to Bacillus anthracis.</title>
        <authorList>
            <person name="Han C.S."/>
            <person name="Xie G."/>
            <person name="Challacombe J.F."/>
            <person name="Altherr M.R."/>
            <person name="Bhotika S.S."/>
            <person name="Bruce D."/>
            <person name="Campbell C.S."/>
            <person name="Campbell M.L."/>
            <person name="Chen J."/>
            <person name="Chertkov O."/>
            <person name="Cleland C."/>
            <person name="Dimitrijevic M."/>
            <person name="Doggett N.A."/>
            <person name="Fawcett J.J."/>
            <person name="Glavina T."/>
            <person name="Goodwin L.A."/>
            <person name="Hill K.K."/>
            <person name="Hitchcock P."/>
            <person name="Jackson P.J."/>
            <person name="Keim P."/>
            <person name="Kewalramani A.R."/>
            <person name="Longmire J."/>
            <person name="Lucas S."/>
            <person name="Malfatti S."/>
            <person name="McMurry K."/>
            <person name="Meincke L.J."/>
            <person name="Misra M."/>
            <person name="Moseman B.L."/>
            <person name="Mundt M."/>
            <person name="Munk A.C."/>
            <person name="Okinaka R.T."/>
            <person name="Parson-Quintana B."/>
            <person name="Reilly L.P."/>
            <person name="Richardson P."/>
            <person name="Robinson D.L."/>
            <person name="Rubin E."/>
            <person name="Saunders E."/>
            <person name="Tapia R."/>
            <person name="Tesmer J.G."/>
            <person name="Thayer N."/>
            <person name="Thompson L.S."/>
            <person name="Tice H."/>
            <person name="Ticknor L.O."/>
            <person name="Wills P.L."/>
            <person name="Brettin T.S."/>
            <person name="Gilna P."/>
        </authorList>
    </citation>
    <scope>NUCLEOTIDE SEQUENCE [LARGE SCALE GENOMIC DNA]</scope>
    <source>
        <strain>ZK / E33L</strain>
    </source>
</reference>
<keyword id="KW-1003">Cell membrane</keyword>
<keyword id="KW-0350">Heme biosynthesis</keyword>
<keyword id="KW-0472">Membrane</keyword>
<keyword id="KW-0808">Transferase</keyword>
<keyword id="KW-0812">Transmembrane</keyword>
<keyword id="KW-1133">Transmembrane helix</keyword>
<gene>
    <name evidence="1" type="primary">ctaB</name>
    <name type="ordered locus">BCE33L3705</name>
</gene>
<organism>
    <name type="scientific">Bacillus cereus (strain ZK / E33L)</name>
    <dbReference type="NCBI Taxonomy" id="288681"/>
    <lineage>
        <taxon>Bacteria</taxon>
        <taxon>Bacillati</taxon>
        <taxon>Bacillota</taxon>
        <taxon>Bacilli</taxon>
        <taxon>Bacillales</taxon>
        <taxon>Bacillaceae</taxon>
        <taxon>Bacillus</taxon>
        <taxon>Bacillus cereus group</taxon>
    </lineage>
</organism>